<sequence>MKRTYQPSKLVRKRRHGFRARMATKNGRKIIAARRAHGRKRLSA</sequence>
<name>RL34_AZOC5</name>
<comment type="similarity">
    <text evidence="1">Belongs to the bacterial ribosomal protein bL34 family.</text>
</comment>
<proteinExistence type="inferred from homology"/>
<gene>
    <name evidence="1" type="primary">rpmH</name>
    <name type="ordered locus">AZC_4055</name>
</gene>
<evidence type="ECO:0000255" key="1">
    <source>
        <dbReference type="HAMAP-Rule" id="MF_00391"/>
    </source>
</evidence>
<evidence type="ECO:0000305" key="2"/>
<organism>
    <name type="scientific">Azorhizobium caulinodans (strain ATCC 43989 / DSM 5975 / JCM 20966 / LMG 6465 / NBRC 14845 / NCIMB 13405 / ORS 571)</name>
    <dbReference type="NCBI Taxonomy" id="438753"/>
    <lineage>
        <taxon>Bacteria</taxon>
        <taxon>Pseudomonadati</taxon>
        <taxon>Pseudomonadota</taxon>
        <taxon>Alphaproteobacteria</taxon>
        <taxon>Hyphomicrobiales</taxon>
        <taxon>Xanthobacteraceae</taxon>
        <taxon>Azorhizobium</taxon>
    </lineage>
</organism>
<reference key="1">
    <citation type="submission" date="2007-04" db="EMBL/GenBank/DDBJ databases">
        <title>Complete genome sequence of the nitrogen-fixing bacterium Azorhizobium caulinodans ORS571.</title>
        <authorList>
            <person name="Lee K.B."/>
            <person name="Backer P.D."/>
            <person name="Aono T."/>
            <person name="Liu C.T."/>
            <person name="Suzuki S."/>
            <person name="Suzuki T."/>
            <person name="Kaneko T."/>
            <person name="Yamada M."/>
            <person name="Tabata S."/>
            <person name="Kupfer D.M."/>
            <person name="Najar F.Z."/>
            <person name="Wiley G.B."/>
            <person name="Roe B."/>
            <person name="Binnewies T."/>
            <person name="Ussery D."/>
            <person name="Vereecke D."/>
            <person name="Gevers D."/>
            <person name="Holsters M."/>
            <person name="Oyaizu H."/>
        </authorList>
    </citation>
    <scope>NUCLEOTIDE SEQUENCE [LARGE SCALE GENOMIC DNA]</scope>
    <source>
        <strain>ATCC 43989 / DSM 5975 / JCM 20966 / LMG 6465 / NBRC 14845 / NCIMB 13405 / ORS 571</strain>
    </source>
</reference>
<protein>
    <recommendedName>
        <fullName evidence="1">Large ribosomal subunit protein bL34</fullName>
    </recommendedName>
    <alternativeName>
        <fullName evidence="2">50S ribosomal protein L34</fullName>
    </alternativeName>
</protein>
<dbReference type="EMBL" id="AP009384">
    <property type="protein sequence ID" value="BAF90053.1"/>
    <property type="molecule type" value="Genomic_DNA"/>
</dbReference>
<dbReference type="RefSeq" id="WP_012172575.1">
    <property type="nucleotide sequence ID" value="NC_009937.1"/>
</dbReference>
<dbReference type="SMR" id="A8ILM7"/>
<dbReference type="STRING" id="438753.AZC_4055"/>
<dbReference type="KEGG" id="azc:AZC_4055"/>
<dbReference type="eggNOG" id="COG0230">
    <property type="taxonomic scope" value="Bacteria"/>
</dbReference>
<dbReference type="HOGENOM" id="CLU_129938_2_0_5"/>
<dbReference type="Proteomes" id="UP000000270">
    <property type="component" value="Chromosome"/>
</dbReference>
<dbReference type="GO" id="GO:1990904">
    <property type="term" value="C:ribonucleoprotein complex"/>
    <property type="evidence" value="ECO:0007669"/>
    <property type="project" value="UniProtKB-KW"/>
</dbReference>
<dbReference type="GO" id="GO:0005840">
    <property type="term" value="C:ribosome"/>
    <property type="evidence" value="ECO:0007669"/>
    <property type="project" value="UniProtKB-KW"/>
</dbReference>
<dbReference type="GO" id="GO:0003735">
    <property type="term" value="F:structural constituent of ribosome"/>
    <property type="evidence" value="ECO:0007669"/>
    <property type="project" value="InterPro"/>
</dbReference>
<dbReference type="GO" id="GO:0006412">
    <property type="term" value="P:translation"/>
    <property type="evidence" value="ECO:0007669"/>
    <property type="project" value="UniProtKB-UniRule"/>
</dbReference>
<dbReference type="FunFam" id="1.10.287.3980:FF:000001">
    <property type="entry name" value="Mitochondrial ribosomal protein L34"/>
    <property type="match status" value="1"/>
</dbReference>
<dbReference type="Gene3D" id="1.10.287.3980">
    <property type="match status" value="1"/>
</dbReference>
<dbReference type="HAMAP" id="MF_00391">
    <property type="entry name" value="Ribosomal_bL34"/>
    <property type="match status" value="1"/>
</dbReference>
<dbReference type="InterPro" id="IPR000271">
    <property type="entry name" value="Ribosomal_bL34"/>
</dbReference>
<dbReference type="InterPro" id="IPR020939">
    <property type="entry name" value="Ribosomal_bL34_CS"/>
</dbReference>
<dbReference type="NCBIfam" id="TIGR01030">
    <property type="entry name" value="rpmH_bact"/>
    <property type="match status" value="1"/>
</dbReference>
<dbReference type="PANTHER" id="PTHR14503:SF4">
    <property type="entry name" value="LARGE RIBOSOMAL SUBUNIT PROTEIN BL34M"/>
    <property type="match status" value="1"/>
</dbReference>
<dbReference type="PANTHER" id="PTHR14503">
    <property type="entry name" value="MITOCHONDRIAL RIBOSOMAL PROTEIN 34 FAMILY MEMBER"/>
    <property type="match status" value="1"/>
</dbReference>
<dbReference type="Pfam" id="PF00468">
    <property type="entry name" value="Ribosomal_L34"/>
    <property type="match status" value="1"/>
</dbReference>
<dbReference type="PROSITE" id="PS00784">
    <property type="entry name" value="RIBOSOMAL_L34"/>
    <property type="match status" value="1"/>
</dbReference>
<accession>A8ILM7</accession>
<feature type="chain" id="PRO_1000072214" description="Large ribosomal subunit protein bL34">
    <location>
        <begin position="1"/>
        <end position="44"/>
    </location>
</feature>
<keyword id="KW-1185">Reference proteome</keyword>
<keyword id="KW-0687">Ribonucleoprotein</keyword>
<keyword id="KW-0689">Ribosomal protein</keyword>